<accession>P0DRB4</accession>
<feature type="signal peptide" evidence="2">
    <location>
        <begin position="1"/>
        <end position="18"/>
    </location>
</feature>
<feature type="propeptide" id="PRO_0000459316" evidence="1">
    <location>
        <begin position="19"/>
        <end position="72"/>
    </location>
</feature>
<feature type="chain" id="PRO_0000459317" description="Beta/delta-urticatoxin-Ui2a" evidence="1">
    <location>
        <begin position="73"/>
        <end position="135"/>
    </location>
</feature>
<feature type="disulfide bond" evidence="4">
    <location>
        <begin position="75"/>
        <end position="92"/>
    </location>
</feature>
<feature type="disulfide bond" evidence="4">
    <location>
        <begin position="82"/>
        <end position="97"/>
    </location>
</feature>
<feature type="disulfide bond" evidence="4">
    <location>
        <begin position="91"/>
        <end position="105"/>
    </location>
</feature>
<feature type="disulfide bond" evidence="4">
    <location>
        <begin position="107"/>
        <end position="121"/>
    </location>
</feature>
<feature type="disulfide bond" evidence="4">
    <location>
        <begin position="114"/>
        <end position="126"/>
    </location>
</feature>
<feature type="disulfide bond" evidence="4">
    <location>
        <begin position="120"/>
        <end position="134"/>
    </location>
</feature>
<organism>
    <name type="scientific">Urtica incisa</name>
    <name type="common">Scrub nettle</name>
    <dbReference type="NCBI Taxonomy" id="1435583"/>
    <lineage>
        <taxon>Eukaryota</taxon>
        <taxon>Viridiplantae</taxon>
        <taxon>Streptophyta</taxon>
        <taxon>Embryophyta</taxon>
        <taxon>Tracheophyta</taxon>
        <taxon>Spermatophyta</taxon>
        <taxon>Magnoliopsida</taxon>
        <taxon>eudicotyledons</taxon>
        <taxon>Gunneridae</taxon>
        <taxon>Pentapetalae</taxon>
        <taxon>rosids</taxon>
        <taxon>fabids</taxon>
        <taxon>Rosales</taxon>
        <taxon>Urticaceae</taxon>
        <taxon>Urtica</taxon>
    </lineage>
</organism>
<proteinExistence type="inferred from homology"/>
<name>NAVTA_URTIN</name>
<dbReference type="EMBL" id="OK376602">
    <property type="protein sequence ID" value="UVC57620.1"/>
    <property type="molecule type" value="Genomic_DNA"/>
</dbReference>
<dbReference type="GO" id="GO:0005576">
    <property type="term" value="C:extracellular region"/>
    <property type="evidence" value="ECO:0007669"/>
    <property type="project" value="UniProtKB-SubCell"/>
</dbReference>
<dbReference type="GO" id="GO:0017080">
    <property type="term" value="F:sodium channel regulator activity"/>
    <property type="evidence" value="ECO:0007669"/>
    <property type="project" value="UniProtKB-KW"/>
</dbReference>
<dbReference type="GO" id="GO:0090729">
    <property type="term" value="F:toxin activity"/>
    <property type="evidence" value="ECO:0007669"/>
    <property type="project" value="UniProtKB-KW"/>
</dbReference>
<dbReference type="GO" id="GO:0006952">
    <property type="term" value="P:defense response"/>
    <property type="evidence" value="ECO:0007669"/>
    <property type="project" value="UniProtKB-KW"/>
</dbReference>
<reference evidence="6" key="1">
    <citation type="journal article" date="2022" name="J. Biol. Chem.">
        <title>Neurotoxic and cytotoxic peptides underlie the painful stings of the tree nettle Urtica ferox.</title>
        <authorList>
            <person name="Xie J."/>
            <person name="Robinson S.D."/>
            <person name="Gilding E.K."/>
            <person name="Jami S."/>
            <person name="Deuis J.R."/>
            <person name="Rehm F.B.H."/>
            <person name="Yap K."/>
            <person name="Ragnarsson L."/>
            <person name="Chan L.Y."/>
            <person name="Hamilton B.R."/>
            <person name="Harvey P.J."/>
            <person name="Craik D.J."/>
            <person name="Vetter I."/>
            <person name="Durek T."/>
        </authorList>
    </citation>
    <scope>NUCLEOTIDE SEQUENCE [GENOMIC DNA]</scope>
</reference>
<sequence length="135" mass="14320">MGAIVLVAIMALVASSSAFSDDEQNMMNAEGEKGIRSYSAADDVSDMIESLFVNSGNRNLVLMMLSGRPQPNARCVEDGQPCGFLVSDKGCCLPNYCSQYARGKCICVPKGQPCGLLHFCCLGLTCDGSFQGTCN</sequence>
<protein>
    <recommendedName>
        <fullName evidence="3">Beta/delta-urticatoxin-Ui2a</fullName>
        <shortName evidence="3">Beta/delta-Ui2a</shortName>
    </recommendedName>
</protein>
<evidence type="ECO:0000250" key="1">
    <source>
        <dbReference type="UniProtKB" id="A0A976XJR9"/>
    </source>
</evidence>
<evidence type="ECO:0000255" key="2"/>
<evidence type="ECO:0000303" key="3">
    <source>
    </source>
</evidence>
<evidence type="ECO:0000305" key="4"/>
<evidence type="ECO:0000305" key="5">
    <source>
    </source>
</evidence>
<evidence type="ECO:0000312" key="6">
    <source>
        <dbReference type="EMBL" id="UVC57620.1"/>
    </source>
</evidence>
<keyword id="KW-1015">Disulfide bond</keyword>
<keyword id="KW-0872">Ion channel impairing toxin</keyword>
<keyword id="KW-0960">Knottin</keyword>
<keyword id="KW-0528">Neurotoxin</keyword>
<keyword id="KW-0611">Plant defense</keyword>
<keyword id="KW-0964">Secreted</keyword>
<keyword id="KW-0732">Signal</keyword>
<keyword id="KW-0800">Toxin</keyword>
<keyword id="KW-0738">Voltage-gated sodium channel impairing toxin</keyword>
<comment type="function">
    <text evidence="1">Plant defense neurotoxin that causes pain and systemic symptoms in mammals via modulation of voltage-gated sodium channels (Nav). Potent modulator of human Nav1.5/SCN5A (EC(50)=55 nM), Nav1.6/SCN8A (EC(50)=0.86 nM), and Nav1.7/SCN9A (EC(50)=208 nM), where it shifts the activation threshold to more negative potentials and delays fast inactivation. Also shifts the voltage-dependence of steady-state fast inactivation of Nav1.6/SCN8A, but not that of Nav1.5/SCN5A or Nav1.7/SCN9A. On Nav1.7/SCN9A, principally acts by binding to extracellular loops of domain IV (Nav site 3). In vivo, intraplantar injection into mice causes numerous dose-dependent, immediate, and long-lasting spontaneous pain behaviors, while no swelling is observed in the injected paw. At the highest doses tested, systemic symptoms including hypokinesia and hypersalivation are observed.</text>
</comment>
<comment type="subcellular location">
    <subcellularLocation>
        <location evidence="5">Secreted</location>
    </subcellularLocation>
</comment>
<comment type="tissue specificity">
    <text evidence="5">Expressed in trichomes, that are stiff epidermal hairs located on the surface of petioles and leaves.</text>
</comment>
<comment type="domain">
    <text evidence="4">The presence of 'disulfide through disulfide knots' structurally defines this protein as a knottin. This toxin contains 2 'disulfide through disulfide knots'.</text>
</comment>
<comment type="similarity">
    <text evidence="4">Belongs to the urticatoxin-2 family.</text>
</comment>